<comment type="function">
    <text evidence="1">Produces ATP from ADP in the presence of a proton gradient across the membrane. The gamma chain is believed to be important in regulating ATPase activity and the flow of protons through the CF(0) complex.</text>
</comment>
<comment type="subunit">
    <text evidence="1">F-type ATPases have 2 components, CF(1) - the catalytic core - and CF(0) - the membrane proton channel. CF(1) has five subunits: alpha(3), beta(3), gamma(1), delta(1), epsilon(1). CF(0) has three main subunits: a, b and c.</text>
</comment>
<comment type="subcellular location">
    <subcellularLocation>
        <location evidence="1">Cell membrane</location>
        <topology evidence="1">Peripheral membrane protein</topology>
    </subcellularLocation>
</comment>
<comment type="similarity">
    <text evidence="1">Belongs to the ATPase gamma chain family.</text>
</comment>
<proteinExistence type="inferred from homology"/>
<reference key="1">
    <citation type="journal article" date="2007" name="Genome Res.">
        <title>Reductive evolution and niche adaptation inferred from the genome of Mycobacterium ulcerans, the causative agent of Buruli ulcer.</title>
        <authorList>
            <person name="Stinear T.P."/>
            <person name="Seemann T."/>
            <person name="Pidot S."/>
            <person name="Frigui W."/>
            <person name="Reysset G."/>
            <person name="Garnier T."/>
            <person name="Meurice G."/>
            <person name="Simon D."/>
            <person name="Bouchier C."/>
            <person name="Ma L."/>
            <person name="Tichit M."/>
            <person name="Porter J.L."/>
            <person name="Ryan J."/>
            <person name="Johnson P.D.R."/>
            <person name="Davies J.K."/>
            <person name="Jenkin G.A."/>
            <person name="Small P.L.C."/>
            <person name="Jones L.M."/>
            <person name="Tekaia F."/>
            <person name="Laval F."/>
            <person name="Daffe M."/>
            <person name="Parkhill J."/>
            <person name="Cole S.T."/>
        </authorList>
    </citation>
    <scope>NUCLEOTIDE SEQUENCE [LARGE SCALE GENOMIC DNA]</scope>
    <source>
        <strain>Agy99</strain>
    </source>
</reference>
<keyword id="KW-0066">ATP synthesis</keyword>
<keyword id="KW-1003">Cell membrane</keyword>
<keyword id="KW-0139">CF(1)</keyword>
<keyword id="KW-0375">Hydrogen ion transport</keyword>
<keyword id="KW-0406">Ion transport</keyword>
<keyword id="KW-0472">Membrane</keyword>
<keyword id="KW-0813">Transport</keyword>
<gene>
    <name evidence="1" type="primary">atpG</name>
    <name type="ordered locus">MUL_3955</name>
</gene>
<accession>A0PUK1</accession>
<feature type="chain" id="PRO_1000053262" description="ATP synthase gamma chain">
    <location>
        <begin position="1"/>
        <end position="304"/>
    </location>
</feature>
<evidence type="ECO:0000255" key="1">
    <source>
        <dbReference type="HAMAP-Rule" id="MF_00815"/>
    </source>
</evidence>
<organism>
    <name type="scientific">Mycobacterium ulcerans (strain Agy99)</name>
    <dbReference type="NCBI Taxonomy" id="362242"/>
    <lineage>
        <taxon>Bacteria</taxon>
        <taxon>Bacillati</taxon>
        <taxon>Actinomycetota</taxon>
        <taxon>Actinomycetes</taxon>
        <taxon>Mycobacteriales</taxon>
        <taxon>Mycobacteriaceae</taxon>
        <taxon>Mycobacterium</taxon>
        <taxon>Mycobacterium ulcerans group</taxon>
    </lineage>
</organism>
<name>ATPG_MYCUA</name>
<protein>
    <recommendedName>
        <fullName evidence="1">ATP synthase gamma chain</fullName>
    </recommendedName>
    <alternativeName>
        <fullName evidence="1">ATP synthase F1 sector gamma subunit</fullName>
    </alternativeName>
    <alternativeName>
        <fullName evidence="1">F-ATPase gamma subunit</fullName>
    </alternativeName>
</protein>
<sequence length="304" mass="33771">MAATLRELRGRIRSAGSIKKITKAQELIATSRIARAQARLESARPYADQITQMLTTLAADAALDHPLLVEHPQPKRAGVLVVSSDRGLCGAYNANVFRRSEELFSLLRDEGKQPVLYVVGRKALAYYTFRNWYIAQSWTGFSEQPKYENAAEIASTLVDAFMLGAGEGEDLQTNNEQSVDELHIVFTEFKSMLSQSTEARRMAPMVVEYVEETGPRTLYSFEPDATTLFESFLPRYLTTRVYAAMLESAASELASRQRAMKSATDNADDLIKALTLMANRERQAQITQEISEIVGGANALADAR</sequence>
<dbReference type="EMBL" id="CP000325">
    <property type="protein sequence ID" value="ABL06020.1"/>
    <property type="molecule type" value="Genomic_DNA"/>
</dbReference>
<dbReference type="RefSeq" id="WP_011741625.1">
    <property type="nucleotide sequence ID" value="NC_008611.1"/>
</dbReference>
<dbReference type="SMR" id="A0PUK1"/>
<dbReference type="KEGG" id="mul:MUL_3955"/>
<dbReference type="eggNOG" id="COG0224">
    <property type="taxonomic scope" value="Bacteria"/>
</dbReference>
<dbReference type="HOGENOM" id="CLU_050669_0_0_11"/>
<dbReference type="Proteomes" id="UP000000765">
    <property type="component" value="Chromosome"/>
</dbReference>
<dbReference type="GO" id="GO:0005886">
    <property type="term" value="C:plasma membrane"/>
    <property type="evidence" value="ECO:0007669"/>
    <property type="project" value="UniProtKB-SubCell"/>
</dbReference>
<dbReference type="GO" id="GO:0045259">
    <property type="term" value="C:proton-transporting ATP synthase complex"/>
    <property type="evidence" value="ECO:0007669"/>
    <property type="project" value="UniProtKB-KW"/>
</dbReference>
<dbReference type="GO" id="GO:0005524">
    <property type="term" value="F:ATP binding"/>
    <property type="evidence" value="ECO:0007669"/>
    <property type="project" value="UniProtKB-UniRule"/>
</dbReference>
<dbReference type="GO" id="GO:0046933">
    <property type="term" value="F:proton-transporting ATP synthase activity, rotational mechanism"/>
    <property type="evidence" value="ECO:0007669"/>
    <property type="project" value="UniProtKB-UniRule"/>
</dbReference>
<dbReference type="GO" id="GO:0042777">
    <property type="term" value="P:proton motive force-driven plasma membrane ATP synthesis"/>
    <property type="evidence" value="ECO:0007669"/>
    <property type="project" value="UniProtKB-UniRule"/>
</dbReference>
<dbReference type="CDD" id="cd12151">
    <property type="entry name" value="F1-ATPase_gamma"/>
    <property type="match status" value="1"/>
</dbReference>
<dbReference type="Gene3D" id="3.40.1380.10">
    <property type="match status" value="1"/>
</dbReference>
<dbReference type="Gene3D" id="1.10.287.80">
    <property type="entry name" value="ATP synthase, gamma subunit, helix hairpin domain"/>
    <property type="match status" value="1"/>
</dbReference>
<dbReference type="HAMAP" id="MF_00815">
    <property type="entry name" value="ATP_synth_gamma_bact"/>
    <property type="match status" value="1"/>
</dbReference>
<dbReference type="InterPro" id="IPR035968">
    <property type="entry name" value="ATP_synth_F1_ATPase_gsu"/>
</dbReference>
<dbReference type="InterPro" id="IPR000131">
    <property type="entry name" value="ATP_synth_F1_gsu"/>
</dbReference>
<dbReference type="InterPro" id="IPR023632">
    <property type="entry name" value="ATP_synth_F1_gsu_CS"/>
</dbReference>
<dbReference type="NCBIfam" id="TIGR01146">
    <property type="entry name" value="ATPsyn_F1gamma"/>
    <property type="match status" value="1"/>
</dbReference>
<dbReference type="NCBIfam" id="NF004145">
    <property type="entry name" value="PRK05621.1-2"/>
    <property type="match status" value="1"/>
</dbReference>
<dbReference type="PANTHER" id="PTHR11693">
    <property type="entry name" value="ATP SYNTHASE GAMMA CHAIN"/>
    <property type="match status" value="1"/>
</dbReference>
<dbReference type="PANTHER" id="PTHR11693:SF22">
    <property type="entry name" value="ATP SYNTHASE SUBUNIT GAMMA, MITOCHONDRIAL"/>
    <property type="match status" value="1"/>
</dbReference>
<dbReference type="Pfam" id="PF00231">
    <property type="entry name" value="ATP-synt"/>
    <property type="match status" value="1"/>
</dbReference>
<dbReference type="PRINTS" id="PR00126">
    <property type="entry name" value="ATPASEGAMMA"/>
</dbReference>
<dbReference type="SUPFAM" id="SSF52943">
    <property type="entry name" value="ATP synthase (F1-ATPase), gamma subunit"/>
    <property type="match status" value="1"/>
</dbReference>
<dbReference type="PROSITE" id="PS00153">
    <property type="entry name" value="ATPASE_GAMMA"/>
    <property type="match status" value="1"/>
</dbReference>